<sequence length="710" mass="79766">MMIGKLWRSVGTVGKFDGRYDGVRTMVGKASNRAGVHVTDTVLFEETSFEFSPSLTPELNEFPMPSLDVITPQAYLTPLGSQSINHAKFLQIPWRQFVFTKPLGLSKSTKLDEAVTLIENSSSSPSNLSTPEAYTDLLHACISAKSLHHGIKICSLILNNPSLRHNPKLLSKLITLFSVCRRLDLARKIFDDVTDSSLLTEKVWAAMAIGYSRNGSPRDALIVYVDMLCSFIEPGNFSISVALKACVDLKDLRVGRGIHAQIVKRKEKVDQVVYNVLLKLYMESGLFDDARKVFDGMSERNVVTWNSLISVLSKKVRVHEMFNLFRKMQEEMIGFSWATLTTILPACSRVAALLTGKEIHAQILKSKEKPDVPLLNSLMDMYGKCGEVEYSRRVFDVMLTKDLASWNIMLNCYAINGNIEEVINLFEWMIESGVAPDGITFVALLSGCSDTGLTEYGLSLFERMKTEFRVSPALEHYACLVDILGRAGKIKEAVKVIETMPFKPSASIWGSLLNSCRLHGNVSVGEIAAKELFVLEPHNPGNYVMVSNIYADAKMWDNVDKIREMMKQRGVKKEAGCSWVQVKDKIQIFVAGGGYEFRNSDEYKKVWTELQEAIEKSGYSPNTSVVLHDVDEETKANWVCGHSERLATTYSLIHTGEGVPIRITKNLRVCADCHSWMKIVSQVTRRVIVLRDTKRFHHFVDGICSCKDYW</sequence>
<comment type="similarity">
    <text evidence="1">Belongs to the PPR family. PCMP-H subfamily.</text>
</comment>
<comment type="sequence caution" evidence="1">
    <conflict type="erroneous initiation">
        <sequence resource="EMBL-CDS" id="BAB01039"/>
    </conflict>
</comment>
<comment type="online information" name="Pentatricopeptide repeat proteins">
    <link uri="https://ppr.plantenergy.uwa.edu.au"/>
</comment>
<gene>
    <name type="primary">PCMP-H57</name>
    <name type="ordered locus">At3g14330</name>
    <name type="ORF">MLN21.12</name>
</gene>
<feature type="chain" id="PRO_0000356088" description="Pentatricopeptide repeat-containing protein At3g14330">
    <location>
        <begin position="1"/>
        <end position="710"/>
    </location>
</feature>
<feature type="repeat" description="PPR 1">
    <location>
        <begin position="166"/>
        <end position="196"/>
    </location>
</feature>
<feature type="repeat" description="PPR 2">
    <location>
        <begin position="200"/>
        <end position="234"/>
    </location>
</feature>
<feature type="repeat" description="PPR 3">
    <location>
        <begin position="235"/>
        <end position="269"/>
    </location>
</feature>
<feature type="repeat" description="PPR 4">
    <location>
        <begin position="270"/>
        <end position="304"/>
    </location>
</feature>
<feature type="repeat" description="PPR 5">
    <location>
        <begin position="305"/>
        <end position="331"/>
    </location>
</feature>
<feature type="repeat" description="PPR 6">
    <location>
        <begin position="336"/>
        <end position="370"/>
    </location>
</feature>
<feature type="repeat" description="PPR 7">
    <location>
        <begin position="371"/>
        <end position="401"/>
    </location>
</feature>
<feature type="repeat" description="PPR 8">
    <location>
        <begin position="402"/>
        <end position="436"/>
    </location>
</feature>
<feature type="repeat" description="PPR 9">
    <location>
        <begin position="437"/>
        <end position="467"/>
    </location>
</feature>
<feature type="repeat" description="PPR 10">
    <location>
        <begin position="473"/>
        <end position="503"/>
    </location>
</feature>
<feature type="region of interest" description="Type E motif">
    <location>
        <begin position="508"/>
        <end position="583"/>
    </location>
</feature>
<feature type="region of interest" description="Type E(+) motif">
    <location>
        <begin position="584"/>
        <end position="615"/>
    </location>
</feature>
<feature type="region of interest" description="Type DYW motif">
    <location>
        <begin position="616"/>
        <end position="710"/>
    </location>
</feature>
<reference key="1">
    <citation type="journal article" date="2000" name="DNA Res.">
        <title>Structural analysis of Arabidopsis thaliana chromosome 3. I. Sequence features of the regions of 4,504,864 bp covered by sixty P1 and TAC clones.</title>
        <authorList>
            <person name="Sato S."/>
            <person name="Nakamura Y."/>
            <person name="Kaneko T."/>
            <person name="Katoh T."/>
            <person name="Asamizu E."/>
            <person name="Tabata S."/>
        </authorList>
    </citation>
    <scope>NUCLEOTIDE SEQUENCE [LARGE SCALE GENOMIC DNA]</scope>
    <source>
        <strain>cv. Columbia</strain>
    </source>
</reference>
<reference key="2">
    <citation type="journal article" date="2017" name="Plant J.">
        <title>Araport11: a complete reannotation of the Arabidopsis thaliana reference genome.</title>
        <authorList>
            <person name="Cheng C.Y."/>
            <person name="Krishnakumar V."/>
            <person name="Chan A.P."/>
            <person name="Thibaud-Nissen F."/>
            <person name="Schobel S."/>
            <person name="Town C.D."/>
        </authorList>
    </citation>
    <scope>GENOME REANNOTATION</scope>
    <source>
        <strain>cv. Columbia</strain>
    </source>
</reference>
<reference key="3">
    <citation type="journal article" date="2000" name="Plant Mol. Biol.">
        <title>In Arabidopsis thaliana, 1% of the genome codes for a novel protein family unique to plants.</title>
        <authorList>
            <person name="Aubourg S."/>
            <person name="Boudet N."/>
            <person name="Kreis M."/>
            <person name="Lecharny A."/>
        </authorList>
    </citation>
    <scope>GENE FAMILY</scope>
</reference>
<reference key="4">
    <citation type="journal article" date="2004" name="Plant Cell">
        <title>Genome-wide analysis of Arabidopsis pentatricopeptide repeat proteins reveals their essential role in organelle biogenesis.</title>
        <authorList>
            <person name="Lurin C."/>
            <person name="Andres C."/>
            <person name="Aubourg S."/>
            <person name="Bellaoui M."/>
            <person name="Bitton F."/>
            <person name="Bruyere C."/>
            <person name="Caboche M."/>
            <person name="Debast C."/>
            <person name="Gualberto J."/>
            <person name="Hoffmann B."/>
            <person name="Lecharny A."/>
            <person name="Le Ret M."/>
            <person name="Martin-Magniette M.-L."/>
            <person name="Mireau H."/>
            <person name="Peeters N."/>
            <person name="Renou J.-P."/>
            <person name="Szurek B."/>
            <person name="Taconnat L."/>
            <person name="Small I."/>
        </authorList>
    </citation>
    <scope>GENE FAMILY</scope>
</reference>
<keyword id="KW-1185">Reference proteome</keyword>
<keyword id="KW-0677">Repeat</keyword>
<dbReference type="EMBL" id="AB022220">
    <property type="protein sequence ID" value="BAB01039.1"/>
    <property type="status" value="ALT_INIT"/>
    <property type="molecule type" value="Genomic_DNA"/>
</dbReference>
<dbReference type="EMBL" id="CP002686">
    <property type="protein sequence ID" value="AEE75502.1"/>
    <property type="molecule type" value="Genomic_DNA"/>
</dbReference>
<dbReference type="RefSeq" id="NP_188050.1">
    <property type="nucleotide sequence ID" value="NM_112291.2"/>
</dbReference>
<dbReference type="SMR" id="Q9LUL5"/>
<dbReference type="FunCoup" id="Q9LUL5">
    <property type="interactions" value="214"/>
</dbReference>
<dbReference type="STRING" id="3702.Q9LUL5"/>
<dbReference type="PaxDb" id="3702-AT3G14330.1"/>
<dbReference type="ProteomicsDB" id="249176"/>
<dbReference type="EnsemblPlants" id="AT3G14330.1">
    <property type="protein sequence ID" value="AT3G14330.1"/>
    <property type="gene ID" value="AT3G14330"/>
</dbReference>
<dbReference type="GeneID" id="820653"/>
<dbReference type="Gramene" id="AT3G14330.1">
    <property type="protein sequence ID" value="AT3G14330.1"/>
    <property type="gene ID" value="AT3G14330"/>
</dbReference>
<dbReference type="KEGG" id="ath:AT3G14330"/>
<dbReference type="Araport" id="AT3G14330"/>
<dbReference type="TAIR" id="AT3G14330">
    <property type="gene designation" value="CREF3"/>
</dbReference>
<dbReference type="eggNOG" id="KOG4197">
    <property type="taxonomic scope" value="Eukaryota"/>
</dbReference>
<dbReference type="HOGENOM" id="CLU_002706_37_8_1"/>
<dbReference type="InParanoid" id="Q9LUL5"/>
<dbReference type="OMA" id="AIGYSRN"/>
<dbReference type="PhylomeDB" id="Q9LUL5"/>
<dbReference type="PRO" id="PR:Q9LUL5"/>
<dbReference type="Proteomes" id="UP000006548">
    <property type="component" value="Chromosome 3"/>
</dbReference>
<dbReference type="ExpressionAtlas" id="Q9LUL5">
    <property type="expression patterns" value="baseline and differential"/>
</dbReference>
<dbReference type="GO" id="GO:0009507">
    <property type="term" value="C:chloroplast"/>
    <property type="evidence" value="ECO:0007669"/>
    <property type="project" value="GOC"/>
</dbReference>
<dbReference type="GO" id="GO:0003729">
    <property type="term" value="F:mRNA binding"/>
    <property type="evidence" value="ECO:0000314"/>
    <property type="project" value="TAIR"/>
</dbReference>
<dbReference type="GO" id="GO:0008270">
    <property type="term" value="F:zinc ion binding"/>
    <property type="evidence" value="ECO:0007669"/>
    <property type="project" value="InterPro"/>
</dbReference>
<dbReference type="GO" id="GO:1900865">
    <property type="term" value="P:chloroplast RNA modification"/>
    <property type="evidence" value="ECO:0000315"/>
    <property type="project" value="TAIR"/>
</dbReference>
<dbReference type="GO" id="GO:0016554">
    <property type="term" value="P:cytidine to uridine editing"/>
    <property type="evidence" value="ECO:0000315"/>
    <property type="project" value="TAIR"/>
</dbReference>
<dbReference type="FunFam" id="1.25.40.10:FF:000366">
    <property type="entry name" value="Pentatricopeptide (PPR) repeat-containing protein"/>
    <property type="match status" value="1"/>
</dbReference>
<dbReference type="FunFam" id="1.25.40.10:FF:000987">
    <property type="entry name" value="Pentatricopeptide repeat-containing protein At3g14330"/>
    <property type="match status" value="1"/>
</dbReference>
<dbReference type="FunFam" id="1.25.40.10:FF:001389">
    <property type="entry name" value="Pentatricopeptide repeat-containing protein At3g14330"/>
    <property type="match status" value="1"/>
</dbReference>
<dbReference type="FunFam" id="1.25.40.10:FF:000031">
    <property type="entry name" value="Pentatricopeptide repeat-containing protein mitochondrial"/>
    <property type="match status" value="1"/>
</dbReference>
<dbReference type="Gene3D" id="1.25.40.10">
    <property type="entry name" value="Tetratricopeptide repeat domain"/>
    <property type="match status" value="4"/>
</dbReference>
<dbReference type="InterPro" id="IPR032867">
    <property type="entry name" value="DYW_dom"/>
</dbReference>
<dbReference type="InterPro" id="IPR046848">
    <property type="entry name" value="E_motif"/>
</dbReference>
<dbReference type="InterPro" id="IPR002885">
    <property type="entry name" value="Pentatricopeptide_rpt"/>
</dbReference>
<dbReference type="InterPro" id="IPR046960">
    <property type="entry name" value="PPR_At4g14850-like_plant"/>
</dbReference>
<dbReference type="InterPro" id="IPR011990">
    <property type="entry name" value="TPR-like_helical_dom_sf"/>
</dbReference>
<dbReference type="NCBIfam" id="TIGR00756">
    <property type="entry name" value="PPR"/>
    <property type="match status" value="3"/>
</dbReference>
<dbReference type="PANTHER" id="PTHR47926">
    <property type="entry name" value="PENTATRICOPEPTIDE REPEAT-CONTAINING PROTEIN"/>
    <property type="match status" value="1"/>
</dbReference>
<dbReference type="Pfam" id="PF14432">
    <property type="entry name" value="DYW_deaminase"/>
    <property type="match status" value="1"/>
</dbReference>
<dbReference type="Pfam" id="PF20431">
    <property type="entry name" value="E_motif"/>
    <property type="match status" value="1"/>
</dbReference>
<dbReference type="Pfam" id="PF01535">
    <property type="entry name" value="PPR"/>
    <property type="match status" value="3"/>
</dbReference>
<dbReference type="Pfam" id="PF13041">
    <property type="entry name" value="PPR_2"/>
    <property type="match status" value="2"/>
</dbReference>
<dbReference type="PROSITE" id="PS51375">
    <property type="entry name" value="PPR"/>
    <property type="match status" value="10"/>
</dbReference>
<organism>
    <name type="scientific">Arabidopsis thaliana</name>
    <name type="common">Mouse-ear cress</name>
    <dbReference type="NCBI Taxonomy" id="3702"/>
    <lineage>
        <taxon>Eukaryota</taxon>
        <taxon>Viridiplantae</taxon>
        <taxon>Streptophyta</taxon>
        <taxon>Embryophyta</taxon>
        <taxon>Tracheophyta</taxon>
        <taxon>Spermatophyta</taxon>
        <taxon>Magnoliopsida</taxon>
        <taxon>eudicotyledons</taxon>
        <taxon>Gunneridae</taxon>
        <taxon>Pentapetalae</taxon>
        <taxon>rosids</taxon>
        <taxon>malvids</taxon>
        <taxon>Brassicales</taxon>
        <taxon>Brassicaceae</taxon>
        <taxon>Camelineae</taxon>
        <taxon>Arabidopsis</taxon>
    </lineage>
</organism>
<evidence type="ECO:0000305" key="1"/>
<name>PP229_ARATH</name>
<proteinExistence type="evidence at transcript level"/>
<protein>
    <recommendedName>
        <fullName>Pentatricopeptide repeat-containing protein At3g14330</fullName>
    </recommendedName>
</protein>
<accession>Q9LUL5</accession>